<comment type="similarity">
    <text evidence="2">Belongs to the chlamydial CPn_0422/CT_273/TC_0545 family.</text>
</comment>
<evidence type="ECO:0000256" key="1">
    <source>
        <dbReference type="SAM" id="MobiDB-lite"/>
    </source>
</evidence>
<evidence type="ECO:0000305" key="2"/>
<accession>Q9Z8C1</accession>
<proteinExistence type="inferred from homology"/>
<protein>
    <recommendedName>
        <fullName>Uncharacterized protein CPn_0422/CP_0331/CPj0422/CpB0438</fullName>
    </recommendedName>
</protein>
<dbReference type="EMBL" id="AE001363">
    <property type="protein sequence ID" value="AAD18566.1"/>
    <property type="molecule type" value="Genomic_DNA"/>
</dbReference>
<dbReference type="EMBL" id="AE002161">
    <property type="protein sequence ID" value="AAF38185.1"/>
    <property type="molecule type" value="Genomic_DNA"/>
</dbReference>
<dbReference type="EMBL" id="BA000008">
    <property type="protein sequence ID" value="BAA98630.1"/>
    <property type="molecule type" value="Genomic_DNA"/>
</dbReference>
<dbReference type="EMBL" id="AE009440">
    <property type="protein sequence ID" value="AAP98369.1"/>
    <property type="molecule type" value="Genomic_DNA"/>
</dbReference>
<dbReference type="PIR" id="D86543">
    <property type="entry name" value="D86543"/>
</dbReference>
<dbReference type="PIR" id="H72080">
    <property type="entry name" value="H72080"/>
</dbReference>
<dbReference type="RefSeq" id="NP_224622.1">
    <property type="nucleotide sequence ID" value="NC_000922.1"/>
</dbReference>
<dbReference type="RefSeq" id="WP_010883065.1">
    <property type="nucleotide sequence ID" value="NZ_LN847257.1"/>
</dbReference>
<dbReference type="SMR" id="Q9Z8C1"/>
<dbReference type="STRING" id="406984.CPK_ORF00933"/>
<dbReference type="GeneID" id="45050469"/>
<dbReference type="KEGG" id="cpa:CP_0331"/>
<dbReference type="KEGG" id="cpj:CPj0422"/>
<dbReference type="KEGG" id="cpn:CPn_0422"/>
<dbReference type="KEGG" id="cpt:CpB0438"/>
<dbReference type="PATRIC" id="fig|115713.3.peg.468"/>
<dbReference type="HOGENOM" id="CLU_126988_0_0_0"/>
<dbReference type="OMA" id="FRKEVHM"/>
<dbReference type="OrthoDB" id="17827at2"/>
<dbReference type="Proteomes" id="UP000000583">
    <property type="component" value="Chromosome"/>
</dbReference>
<dbReference type="Proteomes" id="UP000000801">
    <property type="component" value="Chromosome"/>
</dbReference>
<dbReference type="InterPro" id="IPR035407">
    <property type="entry name" value="DUF5399"/>
</dbReference>
<dbReference type="Pfam" id="PF17377">
    <property type="entry name" value="DUF5399"/>
    <property type="match status" value="1"/>
</dbReference>
<feature type="chain" id="PRO_0000218376" description="Uncharacterized protein CPn_0422/CP_0331/CPj0422/CpB0438">
    <location>
        <begin position="1"/>
        <end position="181"/>
    </location>
</feature>
<feature type="region of interest" description="Disordered" evidence="1">
    <location>
        <begin position="126"/>
        <end position="148"/>
    </location>
</feature>
<feature type="compositionally biased region" description="Acidic residues" evidence="1">
    <location>
        <begin position="131"/>
        <end position="144"/>
    </location>
</feature>
<name>Y422_CHLPN</name>
<reference key="1">
    <citation type="journal article" date="1999" name="Nat. Genet.">
        <title>Comparative genomes of Chlamydia pneumoniae and C. trachomatis.</title>
        <authorList>
            <person name="Kalman S."/>
            <person name="Mitchell W.P."/>
            <person name="Marathe R."/>
            <person name="Lammel C.J."/>
            <person name="Fan J."/>
            <person name="Hyman R.W."/>
            <person name="Olinger L."/>
            <person name="Grimwood J."/>
            <person name="Davis R.W."/>
            <person name="Stephens R.S."/>
        </authorList>
    </citation>
    <scope>NUCLEOTIDE SEQUENCE [LARGE SCALE GENOMIC DNA]</scope>
    <source>
        <strain>CWL029</strain>
    </source>
</reference>
<reference key="2">
    <citation type="journal article" date="2000" name="Nucleic Acids Res.">
        <title>Genome sequences of Chlamydia trachomatis MoPn and Chlamydia pneumoniae AR39.</title>
        <authorList>
            <person name="Read T.D."/>
            <person name="Brunham R.C."/>
            <person name="Shen C."/>
            <person name="Gill S.R."/>
            <person name="Heidelberg J.F."/>
            <person name="White O."/>
            <person name="Hickey E.K."/>
            <person name="Peterson J.D."/>
            <person name="Utterback T.R."/>
            <person name="Berry K.J."/>
            <person name="Bass S."/>
            <person name="Linher K.D."/>
            <person name="Weidman J.F."/>
            <person name="Khouri H.M."/>
            <person name="Craven B."/>
            <person name="Bowman C."/>
            <person name="Dodson R.J."/>
            <person name="Gwinn M.L."/>
            <person name="Nelson W.C."/>
            <person name="DeBoy R.T."/>
            <person name="Kolonay J.F."/>
            <person name="McClarty G."/>
            <person name="Salzberg S.L."/>
            <person name="Eisen J.A."/>
            <person name="Fraser C.M."/>
        </authorList>
    </citation>
    <scope>NUCLEOTIDE SEQUENCE [LARGE SCALE GENOMIC DNA]</scope>
    <source>
        <strain>AR39</strain>
    </source>
</reference>
<reference key="3">
    <citation type="journal article" date="2000" name="Nucleic Acids Res.">
        <title>Comparison of whole genome sequences of Chlamydia pneumoniae J138 from Japan and CWL029 from USA.</title>
        <authorList>
            <person name="Shirai M."/>
            <person name="Hirakawa H."/>
            <person name="Kimoto M."/>
            <person name="Tabuchi M."/>
            <person name="Kishi F."/>
            <person name="Ouchi K."/>
            <person name="Shiba T."/>
            <person name="Ishii K."/>
            <person name="Hattori M."/>
            <person name="Kuhara S."/>
            <person name="Nakazawa T."/>
        </authorList>
    </citation>
    <scope>NUCLEOTIDE SEQUENCE [LARGE SCALE GENOMIC DNA]</scope>
    <source>
        <strain>J138</strain>
    </source>
</reference>
<reference key="4">
    <citation type="submission" date="2002-05" db="EMBL/GenBank/DDBJ databases">
        <title>The genome sequence of Chlamydia pneumoniae TW183 and comparison with other Chlamydia strains based on whole genome sequence analysis.</title>
        <authorList>
            <person name="Geng M.M."/>
            <person name="Schuhmacher A."/>
            <person name="Muehldorfer I."/>
            <person name="Bensch K.W."/>
            <person name="Schaefer K.P."/>
            <person name="Schneider S."/>
            <person name="Pohl T."/>
            <person name="Essig A."/>
            <person name="Marre R."/>
            <person name="Melchers K."/>
        </authorList>
    </citation>
    <scope>NUCLEOTIDE SEQUENCE [LARGE SCALE GENOMIC DNA]</scope>
    <source>
        <strain>TW-183</strain>
    </source>
</reference>
<gene>
    <name type="ordered locus">CPn_0422</name>
    <name type="ordered locus">CP_0331</name>
    <name type="ordered locus">CPj0422</name>
    <name type="ordered locus">CpB0438</name>
</gene>
<sequence length="181" mass="20863">MVEIFNYSTSIYEQHASNNRIVSDFRKEIQMEGISIRDVAKHAQILDMNPKPSALTSLLQTNQKSHWACFSPPNNFYKQRFSTPYLAPSLGSPDQQDEDIEKISSFLKVLTRGKFSYRSQITPFLSYKDKEEEEDEDPEEDDDDPRVQQGKVLLKALDLGVKSTNVMIDYVISRIFQFVQG</sequence>
<organism>
    <name type="scientific">Chlamydia pneumoniae</name>
    <name type="common">Chlamydophila pneumoniae</name>
    <dbReference type="NCBI Taxonomy" id="83558"/>
    <lineage>
        <taxon>Bacteria</taxon>
        <taxon>Pseudomonadati</taxon>
        <taxon>Chlamydiota</taxon>
        <taxon>Chlamydiia</taxon>
        <taxon>Chlamydiales</taxon>
        <taxon>Chlamydiaceae</taxon>
        <taxon>Chlamydia/Chlamydophila group</taxon>
        <taxon>Chlamydia</taxon>
    </lineage>
</organism>